<dbReference type="EC" id="2.3.1.47" evidence="1"/>
<dbReference type="EMBL" id="AE016825">
    <property type="protein sequence ID" value="AAQ62039.1"/>
    <property type="molecule type" value="Genomic_DNA"/>
</dbReference>
<dbReference type="RefSeq" id="WP_011137926.1">
    <property type="nucleotide sequence ID" value="NC_005085.1"/>
</dbReference>
<dbReference type="SMR" id="Q7NPW2"/>
<dbReference type="STRING" id="243365.CV_4380"/>
<dbReference type="GeneID" id="66366137"/>
<dbReference type="KEGG" id="cvi:CV_4380"/>
<dbReference type="eggNOG" id="COG0156">
    <property type="taxonomic scope" value="Bacteria"/>
</dbReference>
<dbReference type="HOGENOM" id="CLU_015846_11_2_4"/>
<dbReference type="OrthoDB" id="9807157at2"/>
<dbReference type="UniPathway" id="UPA00078"/>
<dbReference type="Proteomes" id="UP000001424">
    <property type="component" value="Chromosome"/>
</dbReference>
<dbReference type="GO" id="GO:0008710">
    <property type="term" value="F:8-amino-7-oxononanoate synthase activity"/>
    <property type="evidence" value="ECO:0007669"/>
    <property type="project" value="UniProtKB-UniRule"/>
</dbReference>
<dbReference type="GO" id="GO:0030170">
    <property type="term" value="F:pyridoxal phosphate binding"/>
    <property type="evidence" value="ECO:0007669"/>
    <property type="project" value="UniProtKB-UniRule"/>
</dbReference>
<dbReference type="GO" id="GO:0009102">
    <property type="term" value="P:biotin biosynthetic process"/>
    <property type="evidence" value="ECO:0007669"/>
    <property type="project" value="UniProtKB-UniRule"/>
</dbReference>
<dbReference type="CDD" id="cd06454">
    <property type="entry name" value="KBL_like"/>
    <property type="match status" value="1"/>
</dbReference>
<dbReference type="Gene3D" id="3.90.1150.10">
    <property type="entry name" value="Aspartate Aminotransferase, domain 1"/>
    <property type="match status" value="1"/>
</dbReference>
<dbReference type="Gene3D" id="3.40.640.10">
    <property type="entry name" value="Type I PLP-dependent aspartate aminotransferase-like (Major domain)"/>
    <property type="match status" value="1"/>
</dbReference>
<dbReference type="HAMAP" id="MF_01693">
    <property type="entry name" value="BioF_aminotrans_2"/>
    <property type="match status" value="1"/>
</dbReference>
<dbReference type="InterPro" id="IPR004839">
    <property type="entry name" value="Aminotransferase_I/II_large"/>
</dbReference>
<dbReference type="InterPro" id="IPR050087">
    <property type="entry name" value="AON_synthase_class-II"/>
</dbReference>
<dbReference type="InterPro" id="IPR004723">
    <property type="entry name" value="AONS_Archaea/Proteobacteria"/>
</dbReference>
<dbReference type="InterPro" id="IPR022834">
    <property type="entry name" value="AONS_Proteobacteria"/>
</dbReference>
<dbReference type="InterPro" id="IPR015424">
    <property type="entry name" value="PyrdxlP-dep_Trfase"/>
</dbReference>
<dbReference type="InterPro" id="IPR015421">
    <property type="entry name" value="PyrdxlP-dep_Trfase_major"/>
</dbReference>
<dbReference type="InterPro" id="IPR015422">
    <property type="entry name" value="PyrdxlP-dep_Trfase_small"/>
</dbReference>
<dbReference type="NCBIfam" id="TIGR00858">
    <property type="entry name" value="bioF"/>
    <property type="match status" value="1"/>
</dbReference>
<dbReference type="PANTHER" id="PTHR13693:SF100">
    <property type="entry name" value="8-AMINO-7-OXONONANOATE SYNTHASE"/>
    <property type="match status" value="1"/>
</dbReference>
<dbReference type="PANTHER" id="PTHR13693">
    <property type="entry name" value="CLASS II AMINOTRANSFERASE/8-AMINO-7-OXONONANOATE SYNTHASE"/>
    <property type="match status" value="1"/>
</dbReference>
<dbReference type="Pfam" id="PF00155">
    <property type="entry name" value="Aminotran_1_2"/>
    <property type="match status" value="1"/>
</dbReference>
<dbReference type="SUPFAM" id="SSF53383">
    <property type="entry name" value="PLP-dependent transferases"/>
    <property type="match status" value="1"/>
</dbReference>
<sequence length="383" mass="41026">MRLQDLSPGLGELDERHRLRRRATLESPQGDEVVIDGRSYISFASNDYLGLADHPSLVRALQQGADRWGAGSGASHLLTGHTLAHQQAEEALAGFVGREAALLFGSGYAANLAVITSLVGRGDAVFADKLNHASLNDGCLLSRADFQRFRHNDLAHLEQLLADSGAPTKLIAVDAVYSMDGDQAPLPALLALAERYDAWLYVDDAHGFGVLGDGRGSAALHGLASDRLIYMATLGKAAGLAGAFVAGCRPLVDWLVNKARTYIYTTAQPPALAAAVGASLRLIAEGGERRERLRQLISRCRQRLEGTPYAGASATAIQPFVVGSDENAVRLAETLREQGYWVPAVRPPTVPENGARLRISLSARHELSQLDALLDLMLRPAES</sequence>
<reference key="1">
    <citation type="journal article" date="2003" name="Proc. Natl. Acad. Sci. U.S.A.">
        <title>The complete genome sequence of Chromobacterium violaceum reveals remarkable and exploitable bacterial adaptability.</title>
        <authorList>
            <person name="Vasconcelos A.T.R."/>
            <person name="de Almeida D.F."/>
            <person name="Hungria M."/>
            <person name="Guimaraes C.T."/>
            <person name="Antonio R.V."/>
            <person name="Almeida F.C."/>
            <person name="de Almeida L.G.P."/>
            <person name="de Almeida R."/>
            <person name="Alves-Gomes J.A."/>
            <person name="Andrade E.M."/>
            <person name="Araripe J."/>
            <person name="de Araujo M.F.F."/>
            <person name="Astolfi-Filho S."/>
            <person name="Azevedo V."/>
            <person name="Baptista A.J."/>
            <person name="Bataus L.A.M."/>
            <person name="Batista J.S."/>
            <person name="Belo A."/>
            <person name="van den Berg C."/>
            <person name="Bogo M."/>
            <person name="Bonatto S."/>
            <person name="Bordignon J."/>
            <person name="Brigido M.M."/>
            <person name="Brito C.A."/>
            <person name="Brocchi M."/>
            <person name="Burity H.A."/>
            <person name="Camargo A.A."/>
            <person name="Cardoso D.D.P."/>
            <person name="Carneiro N.P."/>
            <person name="Carraro D.M."/>
            <person name="Carvalho C.M.B."/>
            <person name="Cascardo J.C.M."/>
            <person name="Cavada B.S."/>
            <person name="Chueire L.M.O."/>
            <person name="Creczynski-Pasa T.B."/>
            <person name="Cunha-Junior N.C."/>
            <person name="Fagundes N."/>
            <person name="Falcao C.L."/>
            <person name="Fantinatti F."/>
            <person name="Farias I.P."/>
            <person name="Felipe M.S.S."/>
            <person name="Ferrari L.P."/>
            <person name="Ferro J.A."/>
            <person name="Ferro M.I.T."/>
            <person name="Franco G.R."/>
            <person name="Freitas N.S.A."/>
            <person name="Furlan L.R."/>
            <person name="Gazzinelli R.T."/>
            <person name="Gomes E.A."/>
            <person name="Goncalves P.R."/>
            <person name="Grangeiro T.B."/>
            <person name="Grattapaglia D."/>
            <person name="Grisard E.C."/>
            <person name="Hanna E.S."/>
            <person name="Jardim S.N."/>
            <person name="Laurino J."/>
            <person name="Leoi L.C.T."/>
            <person name="Lima L.F.A."/>
            <person name="Loureiro M.F."/>
            <person name="Lyra M.C.C.P."/>
            <person name="Madeira H.M.F."/>
            <person name="Manfio G.P."/>
            <person name="Maranhao A.Q."/>
            <person name="Martins W.S."/>
            <person name="di Mauro S.M.Z."/>
            <person name="de Medeiros S.R.B."/>
            <person name="Meissner R.V."/>
            <person name="Moreira M.A.M."/>
            <person name="Nascimento F.F."/>
            <person name="Nicolas M.F."/>
            <person name="Oliveira J.G."/>
            <person name="Oliveira S.C."/>
            <person name="Paixao R.F.C."/>
            <person name="Parente J.A."/>
            <person name="Pedrosa F.O."/>
            <person name="Pena S.D.J."/>
            <person name="Pereira J.O."/>
            <person name="Pereira M."/>
            <person name="Pinto L.S.R.C."/>
            <person name="Pinto L.S."/>
            <person name="Porto J.I.R."/>
            <person name="Potrich D.P."/>
            <person name="Ramalho-Neto C.E."/>
            <person name="Reis A.M.M."/>
            <person name="Rigo L.U."/>
            <person name="Rondinelli E."/>
            <person name="Santos E.B.P."/>
            <person name="Santos F.R."/>
            <person name="Schneider M.P.C."/>
            <person name="Seuanez H.N."/>
            <person name="Silva A.M.R."/>
            <person name="da Silva A.L.C."/>
            <person name="Silva D.W."/>
            <person name="Silva R."/>
            <person name="Simoes I.C."/>
            <person name="Simon D."/>
            <person name="Soares C.M.A."/>
            <person name="Soares R.B.A."/>
            <person name="Souza E.M."/>
            <person name="Souza K.R.L."/>
            <person name="Souza R.C."/>
            <person name="Steffens M.B.R."/>
            <person name="Steindel M."/>
            <person name="Teixeira S.R."/>
            <person name="Urmenyi T."/>
            <person name="Vettore A."/>
            <person name="Wassem R."/>
            <person name="Zaha A."/>
            <person name="Simpson A.J.G."/>
        </authorList>
    </citation>
    <scope>NUCLEOTIDE SEQUENCE [LARGE SCALE GENOMIC DNA]</scope>
    <source>
        <strain>ATCC 12472 / DSM 30191 / JCM 1249 / CCUG 213 / NBRC 12614 / NCIMB 9131 / NCTC 9757 / MK</strain>
    </source>
</reference>
<proteinExistence type="inferred from homology"/>
<protein>
    <recommendedName>
        <fullName evidence="1">8-amino-7-oxononanoate synthase</fullName>
        <shortName evidence="1">AONS</shortName>
        <ecNumber evidence="1">2.3.1.47</ecNumber>
    </recommendedName>
    <alternativeName>
        <fullName evidence="1">7-keto-8-amino-pelargonic acid synthase</fullName>
        <shortName evidence="1">7-KAP synthase</shortName>
        <shortName evidence="1">KAPA synthase</shortName>
    </alternativeName>
    <alternativeName>
        <fullName evidence="1">8-amino-7-ketopelargonate synthase</fullName>
    </alternativeName>
</protein>
<evidence type="ECO:0000255" key="1">
    <source>
        <dbReference type="HAMAP-Rule" id="MF_01693"/>
    </source>
</evidence>
<keyword id="KW-0093">Biotin biosynthesis</keyword>
<keyword id="KW-0663">Pyridoxal phosphate</keyword>
<keyword id="KW-1185">Reference proteome</keyword>
<keyword id="KW-0808">Transferase</keyword>
<accession>Q7NPW2</accession>
<gene>
    <name evidence="1" type="primary">bioF</name>
    <name type="ordered locus">CV_4380</name>
</gene>
<comment type="function">
    <text evidence="1">Catalyzes the decarboxylative condensation of pimeloyl-[acyl-carrier protein] and L-alanine to produce 8-amino-7-oxononanoate (AON), [acyl-carrier protein], and carbon dioxide.</text>
</comment>
<comment type="catalytic activity">
    <reaction evidence="1">
        <text>6-carboxyhexanoyl-[ACP] + L-alanine + H(+) = (8S)-8-amino-7-oxononanoate + holo-[ACP] + CO2</text>
        <dbReference type="Rhea" id="RHEA:42288"/>
        <dbReference type="Rhea" id="RHEA-COMP:9685"/>
        <dbReference type="Rhea" id="RHEA-COMP:9955"/>
        <dbReference type="ChEBI" id="CHEBI:15378"/>
        <dbReference type="ChEBI" id="CHEBI:16526"/>
        <dbReference type="ChEBI" id="CHEBI:57972"/>
        <dbReference type="ChEBI" id="CHEBI:64479"/>
        <dbReference type="ChEBI" id="CHEBI:78846"/>
        <dbReference type="ChEBI" id="CHEBI:149468"/>
        <dbReference type="EC" id="2.3.1.47"/>
    </reaction>
</comment>
<comment type="cofactor">
    <cofactor evidence="1">
        <name>pyridoxal 5'-phosphate</name>
        <dbReference type="ChEBI" id="CHEBI:597326"/>
    </cofactor>
</comment>
<comment type="pathway">
    <text evidence="1">Cofactor biosynthesis; biotin biosynthesis.</text>
</comment>
<comment type="subunit">
    <text evidence="1">Homodimer.</text>
</comment>
<comment type="similarity">
    <text evidence="1">Belongs to the class-II pyridoxal-phosphate-dependent aminotransferase family. BioF subfamily.</text>
</comment>
<name>BIOF_CHRVO</name>
<feature type="chain" id="PRO_0000380954" description="8-amino-7-oxononanoate synthase">
    <location>
        <begin position="1"/>
        <end position="383"/>
    </location>
</feature>
<feature type="binding site" evidence="1">
    <location>
        <position position="20"/>
    </location>
    <ligand>
        <name>substrate</name>
    </ligand>
</feature>
<feature type="binding site" evidence="1">
    <location>
        <begin position="107"/>
        <end position="108"/>
    </location>
    <ligand>
        <name>pyridoxal 5'-phosphate</name>
        <dbReference type="ChEBI" id="CHEBI:597326"/>
    </ligand>
</feature>
<feature type="binding site" evidence="1">
    <location>
        <position position="132"/>
    </location>
    <ligand>
        <name>substrate</name>
    </ligand>
</feature>
<feature type="binding site" evidence="1">
    <location>
        <position position="178"/>
    </location>
    <ligand>
        <name>pyridoxal 5'-phosphate</name>
        <dbReference type="ChEBI" id="CHEBI:597326"/>
    </ligand>
</feature>
<feature type="binding site" evidence="1">
    <location>
        <position position="206"/>
    </location>
    <ligand>
        <name>pyridoxal 5'-phosphate</name>
        <dbReference type="ChEBI" id="CHEBI:597326"/>
    </ligand>
</feature>
<feature type="binding site" evidence="1">
    <location>
        <position position="233"/>
    </location>
    <ligand>
        <name>pyridoxal 5'-phosphate</name>
        <dbReference type="ChEBI" id="CHEBI:597326"/>
    </ligand>
</feature>
<feature type="binding site" evidence="1">
    <location>
        <position position="349"/>
    </location>
    <ligand>
        <name>substrate</name>
    </ligand>
</feature>
<feature type="modified residue" description="N6-(pyridoxal phosphate)lysine" evidence="1">
    <location>
        <position position="236"/>
    </location>
</feature>
<organism>
    <name type="scientific">Chromobacterium violaceum (strain ATCC 12472 / DSM 30191 / JCM 1249 / CCUG 213 / NBRC 12614 / NCIMB 9131 / NCTC 9757 / MK)</name>
    <dbReference type="NCBI Taxonomy" id="243365"/>
    <lineage>
        <taxon>Bacteria</taxon>
        <taxon>Pseudomonadati</taxon>
        <taxon>Pseudomonadota</taxon>
        <taxon>Betaproteobacteria</taxon>
        <taxon>Neisseriales</taxon>
        <taxon>Chromobacteriaceae</taxon>
        <taxon>Chromobacterium</taxon>
    </lineage>
</organism>